<protein>
    <recommendedName>
        <fullName evidence="1">Iron-sulfur cluster insertion protein ErpA</fullName>
    </recommendedName>
</protein>
<reference key="1">
    <citation type="submission" date="2002-12" db="EMBL/GenBank/DDBJ databases">
        <title>Complete genome sequence of Vibrio vulnificus CMCP6.</title>
        <authorList>
            <person name="Rhee J.H."/>
            <person name="Kim S.Y."/>
            <person name="Chung S.S."/>
            <person name="Kim J.J."/>
            <person name="Moon Y.H."/>
            <person name="Jeong H."/>
            <person name="Choy H.E."/>
        </authorList>
    </citation>
    <scope>NUCLEOTIDE SEQUENCE [LARGE SCALE GENOMIC DNA]</scope>
    <source>
        <strain>CMCP6</strain>
    </source>
</reference>
<reference key="2">
    <citation type="journal article" date="2011" name="Mol. Syst. Biol.">
        <title>Integrative genome-scale metabolic analysis of Vibrio vulnificus for drug targeting and discovery.</title>
        <authorList>
            <person name="Kim H.U."/>
            <person name="Kim S.Y."/>
            <person name="Jeong H."/>
            <person name="Kim T.Y."/>
            <person name="Kim J.J."/>
            <person name="Choy H.E."/>
            <person name="Yi K.Y."/>
            <person name="Rhee J.H."/>
            <person name="Lee S.Y."/>
        </authorList>
    </citation>
    <scope>SEQUENCE REVISION TO 16-19</scope>
    <source>
        <strain>CMCP6</strain>
    </source>
</reference>
<accession>Q8DBX7</accession>
<sequence>MSDINLPLSFSDAAAARVKMLIAEEENPALKLRVYITGGGCSGFQYGFTFDESVNEGDTTIENSGVTLVVDPMSLQYLIGGVVDYTEGLEGSRFFVNNPNATTTCGCGASFSV</sequence>
<organism>
    <name type="scientific">Vibrio vulnificus (strain CMCP6)</name>
    <dbReference type="NCBI Taxonomy" id="216895"/>
    <lineage>
        <taxon>Bacteria</taxon>
        <taxon>Pseudomonadati</taxon>
        <taxon>Pseudomonadota</taxon>
        <taxon>Gammaproteobacteria</taxon>
        <taxon>Vibrionales</taxon>
        <taxon>Vibrionaceae</taxon>
        <taxon>Vibrio</taxon>
    </lineage>
</organism>
<name>ERPA_VIBVU</name>
<feature type="chain" id="PRO_0000311572" description="Iron-sulfur cluster insertion protein ErpA">
    <location>
        <begin position="1"/>
        <end position="113"/>
    </location>
</feature>
<feature type="binding site" evidence="1">
    <location>
        <position position="41"/>
    </location>
    <ligand>
        <name>iron-sulfur cluster</name>
        <dbReference type="ChEBI" id="CHEBI:30408"/>
    </ligand>
</feature>
<feature type="binding site" evidence="1">
    <location>
        <position position="105"/>
    </location>
    <ligand>
        <name>iron-sulfur cluster</name>
        <dbReference type="ChEBI" id="CHEBI:30408"/>
    </ligand>
</feature>
<feature type="binding site" evidence="1">
    <location>
        <position position="107"/>
    </location>
    <ligand>
        <name>iron-sulfur cluster</name>
        <dbReference type="ChEBI" id="CHEBI:30408"/>
    </ligand>
</feature>
<proteinExistence type="inferred from homology"/>
<gene>
    <name evidence="1" type="primary">erpA</name>
    <name type="ordered locus">VV1_1679</name>
</gene>
<keyword id="KW-0408">Iron</keyword>
<keyword id="KW-0411">Iron-sulfur</keyword>
<keyword id="KW-0479">Metal-binding</keyword>
<comment type="function">
    <text evidence="1">Required for insertion of 4Fe-4S clusters for at least IspG.</text>
</comment>
<comment type="cofactor">
    <cofactor evidence="1">
        <name>iron-sulfur cluster</name>
        <dbReference type="ChEBI" id="CHEBI:30408"/>
    </cofactor>
    <text evidence="1">Binds 1 iron-sulfur cluster per subunit.</text>
</comment>
<comment type="subunit">
    <text evidence="1">Homodimer.</text>
</comment>
<comment type="similarity">
    <text evidence="1">Belongs to the HesB/IscA family.</text>
</comment>
<evidence type="ECO:0000255" key="1">
    <source>
        <dbReference type="HAMAP-Rule" id="MF_01380"/>
    </source>
</evidence>
<dbReference type="EMBL" id="AE016795">
    <property type="protein sequence ID" value="AAO10095.2"/>
    <property type="molecule type" value="Genomic_DNA"/>
</dbReference>
<dbReference type="RefSeq" id="WP_011079598.1">
    <property type="nucleotide sequence ID" value="NC_004459.3"/>
</dbReference>
<dbReference type="SMR" id="Q8DBX7"/>
<dbReference type="GeneID" id="93895929"/>
<dbReference type="KEGG" id="vvu:VV1_1679"/>
<dbReference type="HOGENOM" id="CLU_069054_5_3_6"/>
<dbReference type="Proteomes" id="UP000002275">
    <property type="component" value="Chromosome 1"/>
</dbReference>
<dbReference type="GO" id="GO:0005829">
    <property type="term" value="C:cytosol"/>
    <property type="evidence" value="ECO:0007669"/>
    <property type="project" value="TreeGrafter"/>
</dbReference>
<dbReference type="GO" id="GO:0051537">
    <property type="term" value="F:2 iron, 2 sulfur cluster binding"/>
    <property type="evidence" value="ECO:0007669"/>
    <property type="project" value="TreeGrafter"/>
</dbReference>
<dbReference type="GO" id="GO:0051539">
    <property type="term" value="F:4 iron, 4 sulfur cluster binding"/>
    <property type="evidence" value="ECO:0007669"/>
    <property type="project" value="TreeGrafter"/>
</dbReference>
<dbReference type="GO" id="GO:0005506">
    <property type="term" value="F:iron ion binding"/>
    <property type="evidence" value="ECO:0007669"/>
    <property type="project" value="UniProtKB-UniRule"/>
</dbReference>
<dbReference type="GO" id="GO:0016226">
    <property type="term" value="P:iron-sulfur cluster assembly"/>
    <property type="evidence" value="ECO:0007669"/>
    <property type="project" value="UniProtKB-UniRule"/>
</dbReference>
<dbReference type="FunFam" id="2.60.300.12:FF:000002">
    <property type="entry name" value="Iron-sulfur cluster insertion protein ErpA"/>
    <property type="match status" value="1"/>
</dbReference>
<dbReference type="Gene3D" id="2.60.300.12">
    <property type="entry name" value="HesB-like domain"/>
    <property type="match status" value="1"/>
</dbReference>
<dbReference type="HAMAP" id="MF_01380">
    <property type="entry name" value="Fe_S_insert_ErpA"/>
    <property type="match status" value="1"/>
</dbReference>
<dbReference type="InterPro" id="IPR000361">
    <property type="entry name" value="FeS_biogenesis"/>
</dbReference>
<dbReference type="InterPro" id="IPR016092">
    <property type="entry name" value="FeS_cluster_insertion"/>
</dbReference>
<dbReference type="InterPro" id="IPR017870">
    <property type="entry name" value="FeS_cluster_insertion_CS"/>
</dbReference>
<dbReference type="InterPro" id="IPR023063">
    <property type="entry name" value="FeS_cluster_insertion_RrpA"/>
</dbReference>
<dbReference type="InterPro" id="IPR035903">
    <property type="entry name" value="HesB-like_dom_sf"/>
</dbReference>
<dbReference type="NCBIfam" id="TIGR00049">
    <property type="entry name" value="iron-sulfur cluster assembly accessory protein"/>
    <property type="match status" value="1"/>
</dbReference>
<dbReference type="NCBIfam" id="NF010147">
    <property type="entry name" value="PRK13623.1"/>
    <property type="match status" value="1"/>
</dbReference>
<dbReference type="PANTHER" id="PTHR43011">
    <property type="entry name" value="IRON-SULFUR CLUSTER ASSEMBLY 2 HOMOLOG, MITOCHONDRIAL"/>
    <property type="match status" value="1"/>
</dbReference>
<dbReference type="PANTHER" id="PTHR43011:SF1">
    <property type="entry name" value="IRON-SULFUR CLUSTER ASSEMBLY 2 HOMOLOG, MITOCHONDRIAL"/>
    <property type="match status" value="1"/>
</dbReference>
<dbReference type="Pfam" id="PF01521">
    <property type="entry name" value="Fe-S_biosyn"/>
    <property type="match status" value="1"/>
</dbReference>
<dbReference type="SUPFAM" id="SSF89360">
    <property type="entry name" value="HesB-like domain"/>
    <property type="match status" value="1"/>
</dbReference>
<dbReference type="PROSITE" id="PS01152">
    <property type="entry name" value="HESB"/>
    <property type="match status" value="1"/>
</dbReference>